<proteinExistence type="evidence at protein level"/>
<evidence type="ECO:0000305" key="1"/>
<organism>
    <name type="scientific">Triticum aestivum</name>
    <name type="common">Wheat</name>
    <dbReference type="NCBI Taxonomy" id="4565"/>
    <lineage>
        <taxon>Eukaryota</taxon>
        <taxon>Viridiplantae</taxon>
        <taxon>Streptophyta</taxon>
        <taxon>Embryophyta</taxon>
        <taxon>Tracheophyta</taxon>
        <taxon>Spermatophyta</taxon>
        <taxon>Magnoliopsida</taxon>
        <taxon>Liliopsida</taxon>
        <taxon>Poales</taxon>
        <taxon>Poaceae</taxon>
        <taxon>BOP clade</taxon>
        <taxon>Pooideae</taxon>
        <taxon>Triticodae</taxon>
        <taxon>Triticeae</taxon>
        <taxon>Triticinae</taxon>
        <taxon>Triticum</taxon>
    </lineage>
</organism>
<sequence length="27" mass="3070">NEDCTPWTSTLIXPLPXCRNYVXXQAC</sequence>
<comment type="function">
    <text>Alpha-amylase/trypsin inhibitor. It could be involved in insect defense mechanisms.</text>
</comment>
<comment type="subcellular location">
    <subcellularLocation>
        <location>Secreted</location>
    </subcellularLocation>
</comment>
<comment type="tissue specificity">
    <text>Developing endosperm.</text>
</comment>
<comment type="miscellaneous">
    <text>CM proteins would be involved in the cooking quality of pasta.</text>
</comment>
<comment type="similarity">
    <text evidence="1">Belongs to the protease inhibitor I6 (cereal trypsin/alpha-amylase inhibitor) family.</text>
</comment>
<protein>
    <recommendedName>
        <fullName>Alpha-amylase/trypsin inhibitor CM17</fullName>
    </recommendedName>
    <alternativeName>
        <fullName>Chloroform/methanol-soluble protein CM17</fullName>
    </alternativeName>
</protein>
<accession>P16852</accession>
<keyword id="KW-0022">Alpha-amylase inhibitor</keyword>
<keyword id="KW-0903">Direct protein sequencing</keyword>
<keyword id="KW-0646">Protease inhibitor</keyword>
<keyword id="KW-1185">Reference proteome</keyword>
<keyword id="KW-0964">Secreted</keyword>
<keyword id="KW-0722">Serine protease inhibitor</keyword>
<name>IAC17_WHEAT</name>
<reference key="1">
    <citation type="journal article" date="1986" name="Biochim. Biophys. Acta">
        <title>Evolutionary implications of sequential homologies among members of the trypsin / alpha-amylase inhibitor family (CM-proteins) in wheat and barley.</title>
        <authorList>
            <person name="Barber D."/>
            <person name="Sanchez-Monge R."/>
            <person name="Garcia-Olmedo F."/>
            <person name="Salcedo G."/>
            <person name="Mendez E."/>
        </authorList>
    </citation>
    <scope>PROTEIN SEQUENCE</scope>
</reference>
<feature type="chain" id="PRO_0000070488" description="Alpha-amylase/trypsin inhibitor CM17">
    <location>
        <begin position="1"/>
        <end position="27" status="greater than"/>
    </location>
</feature>
<feature type="non-terminal residue">
    <location>
        <position position="27"/>
    </location>
</feature>
<dbReference type="PIR" id="D25310">
    <property type="entry name" value="D25310"/>
</dbReference>
<dbReference type="STRING" id="4565.P16852"/>
<dbReference type="Proteomes" id="UP000019116">
    <property type="component" value="Unplaced"/>
</dbReference>
<dbReference type="GO" id="GO:0005576">
    <property type="term" value="C:extracellular region"/>
    <property type="evidence" value="ECO:0007669"/>
    <property type="project" value="UniProtKB-SubCell"/>
</dbReference>
<dbReference type="GO" id="GO:0015066">
    <property type="term" value="F:alpha-amylase inhibitor activity"/>
    <property type="evidence" value="ECO:0007669"/>
    <property type="project" value="UniProtKB-KW"/>
</dbReference>
<dbReference type="GO" id="GO:0004867">
    <property type="term" value="F:serine-type endopeptidase inhibitor activity"/>
    <property type="evidence" value="ECO:0007669"/>
    <property type="project" value="UniProtKB-KW"/>
</dbReference>
<dbReference type="InterPro" id="IPR006105">
    <property type="entry name" value="Allergen/tryp_amyl_inhib_CS"/>
</dbReference>
<dbReference type="PROSITE" id="PS00426">
    <property type="entry name" value="CEREAL_TRYP_AMYL_INH"/>
    <property type="match status" value="1"/>
</dbReference>